<evidence type="ECO:0000255" key="1">
    <source>
        <dbReference type="HAMAP-Rule" id="MF_01103"/>
    </source>
</evidence>
<feature type="chain" id="PRO_1000180974" description="UPF0291 protein LBUL_1264">
    <location>
        <begin position="1"/>
        <end position="78"/>
    </location>
</feature>
<proteinExistence type="inferred from homology"/>
<sequence length="78" mass="9142">MTEADQVRKRINELYKKKQESGLTEVEEAERKELHKQFIANFRAGFKQQLDSLVIVDDQGKDVTPDKAKQIQKKKVLR</sequence>
<organism>
    <name type="scientific">Lactobacillus delbrueckii subsp. bulgaricus (strain ATCC BAA-365 / Lb-18)</name>
    <dbReference type="NCBI Taxonomy" id="321956"/>
    <lineage>
        <taxon>Bacteria</taxon>
        <taxon>Bacillati</taxon>
        <taxon>Bacillota</taxon>
        <taxon>Bacilli</taxon>
        <taxon>Lactobacillales</taxon>
        <taxon>Lactobacillaceae</taxon>
        <taxon>Lactobacillus</taxon>
    </lineage>
</organism>
<reference key="1">
    <citation type="journal article" date="2006" name="Proc. Natl. Acad. Sci. U.S.A.">
        <title>Comparative genomics of the lactic acid bacteria.</title>
        <authorList>
            <person name="Makarova K.S."/>
            <person name="Slesarev A."/>
            <person name="Wolf Y.I."/>
            <person name="Sorokin A."/>
            <person name="Mirkin B."/>
            <person name="Koonin E.V."/>
            <person name="Pavlov A."/>
            <person name="Pavlova N."/>
            <person name="Karamychev V."/>
            <person name="Polouchine N."/>
            <person name="Shakhova V."/>
            <person name="Grigoriev I."/>
            <person name="Lou Y."/>
            <person name="Rohksar D."/>
            <person name="Lucas S."/>
            <person name="Huang K."/>
            <person name="Goodstein D.M."/>
            <person name="Hawkins T."/>
            <person name="Plengvidhya V."/>
            <person name="Welker D."/>
            <person name="Hughes J."/>
            <person name="Goh Y."/>
            <person name="Benson A."/>
            <person name="Baldwin K."/>
            <person name="Lee J.-H."/>
            <person name="Diaz-Muniz I."/>
            <person name="Dosti B."/>
            <person name="Smeianov V."/>
            <person name="Wechter W."/>
            <person name="Barabote R."/>
            <person name="Lorca G."/>
            <person name="Altermann E."/>
            <person name="Barrangou R."/>
            <person name="Ganesan B."/>
            <person name="Xie Y."/>
            <person name="Rawsthorne H."/>
            <person name="Tamir D."/>
            <person name="Parker C."/>
            <person name="Breidt F."/>
            <person name="Broadbent J.R."/>
            <person name="Hutkins R."/>
            <person name="O'Sullivan D."/>
            <person name="Steele J."/>
            <person name="Unlu G."/>
            <person name="Saier M.H. Jr."/>
            <person name="Klaenhammer T."/>
            <person name="Richardson P."/>
            <person name="Kozyavkin S."/>
            <person name="Weimer B.C."/>
            <person name="Mills D.A."/>
        </authorList>
    </citation>
    <scope>NUCLEOTIDE SEQUENCE [LARGE SCALE GENOMIC DNA]</scope>
    <source>
        <strain>ATCC BAA-365 / Lb-18</strain>
    </source>
</reference>
<dbReference type="EMBL" id="CP000412">
    <property type="protein sequence ID" value="ABJ58790.1"/>
    <property type="molecule type" value="Genomic_DNA"/>
</dbReference>
<dbReference type="RefSeq" id="WP_011678406.1">
    <property type="nucleotide sequence ID" value="NC_008529.1"/>
</dbReference>
<dbReference type="SMR" id="Q049T2"/>
<dbReference type="KEGG" id="lbu:LBUL_1264"/>
<dbReference type="HOGENOM" id="CLU_173137_0_1_9"/>
<dbReference type="BioCyc" id="LDEL321956:LBUL_RS05940-MONOMER"/>
<dbReference type="GO" id="GO:0005737">
    <property type="term" value="C:cytoplasm"/>
    <property type="evidence" value="ECO:0007669"/>
    <property type="project" value="UniProtKB-SubCell"/>
</dbReference>
<dbReference type="Gene3D" id="1.10.287.540">
    <property type="entry name" value="Helix hairpin bin"/>
    <property type="match status" value="1"/>
</dbReference>
<dbReference type="HAMAP" id="MF_01103">
    <property type="entry name" value="UPF0291"/>
    <property type="match status" value="1"/>
</dbReference>
<dbReference type="InterPro" id="IPR009242">
    <property type="entry name" value="DUF896"/>
</dbReference>
<dbReference type="PANTHER" id="PTHR37300">
    <property type="entry name" value="UPF0291 PROTEIN CBO2609/CLC_2481"/>
    <property type="match status" value="1"/>
</dbReference>
<dbReference type="PANTHER" id="PTHR37300:SF1">
    <property type="entry name" value="UPF0291 PROTEIN YNZC"/>
    <property type="match status" value="1"/>
</dbReference>
<dbReference type="Pfam" id="PF05979">
    <property type="entry name" value="DUF896"/>
    <property type="match status" value="1"/>
</dbReference>
<dbReference type="SUPFAM" id="SSF158221">
    <property type="entry name" value="YnzC-like"/>
    <property type="match status" value="1"/>
</dbReference>
<name>Y1264_LACDB</name>
<comment type="subcellular location">
    <subcellularLocation>
        <location evidence="1">Cytoplasm</location>
    </subcellularLocation>
</comment>
<comment type="similarity">
    <text evidence="1">Belongs to the UPF0291 family.</text>
</comment>
<keyword id="KW-0963">Cytoplasm</keyword>
<gene>
    <name type="ordered locus">LBUL_1264</name>
</gene>
<accession>Q049T2</accession>
<protein>
    <recommendedName>
        <fullName evidence="1">UPF0291 protein LBUL_1264</fullName>
    </recommendedName>
</protein>